<evidence type="ECO:0000255" key="1">
    <source>
        <dbReference type="HAMAP-Rule" id="MF_01039"/>
    </source>
</evidence>
<name>GPMA_CHLT3</name>
<protein>
    <recommendedName>
        <fullName evidence="1">2,3-bisphosphoglycerate-dependent phosphoglycerate mutase</fullName>
        <shortName evidence="1">BPG-dependent PGAM</shortName>
        <shortName evidence="1">PGAM</shortName>
        <shortName evidence="1">Phosphoglyceromutase</shortName>
        <shortName evidence="1">dPGM</shortName>
        <ecNumber evidence="1">5.4.2.11</ecNumber>
    </recommendedName>
</protein>
<comment type="function">
    <text evidence="1">Catalyzes the interconversion of 2-phosphoglycerate and 3-phosphoglycerate.</text>
</comment>
<comment type="catalytic activity">
    <reaction evidence="1">
        <text>(2R)-2-phosphoglycerate = (2R)-3-phosphoglycerate</text>
        <dbReference type="Rhea" id="RHEA:15901"/>
        <dbReference type="ChEBI" id="CHEBI:58272"/>
        <dbReference type="ChEBI" id="CHEBI:58289"/>
        <dbReference type="EC" id="5.4.2.11"/>
    </reaction>
</comment>
<comment type="pathway">
    <text evidence="1">Carbohydrate degradation; glycolysis; pyruvate from D-glyceraldehyde 3-phosphate: step 3/5.</text>
</comment>
<comment type="similarity">
    <text evidence="1">Belongs to the phosphoglycerate mutase family. BPG-dependent PGAM subfamily.</text>
</comment>
<organism>
    <name type="scientific">Chloroherpeton thalassium (strain ATCC 35110 / GB-78)</name>
    <dbReference type="NCBI Taxonomy" id="517418"/>
    <lineage>
        <taxon>Bacteria</taxon>
        <taxon>Pseudomonadati</taxon>
        <taxon>Chlorobiota</taxon>
        <taxon>Chlorobiia</taxon>
        <taxon>Chlorobiales</taxon>
        <taxon>Chloroherpetonaceae</taxon>
        <taxon>Chloroherpeton</taxon>
    </lineage>
</organism>
<gene>
    <name evidence="1" type="primary">gpmA</name>
    <name type="ordered locus">Ctha_2159</name>
</gene>
<accession>B3QVL0</accession>
<dbReference type="EC" id="5.4.2.11" evidence="1"/>
<dbReference type="EMBL" id="CP001100">
    <property type="protein sequence ID" value="ACF14610.1"/>
    <property type="molecule type" value="Genomic_DNA"/>
</dbReference>
<dbReference type="RefSeq" id="WP_012500693.1">
    <property type="nucleotide sequence ID" value="NC_011026.1"/>
</dbReference>
<dbReference type="SMR" id="B3QVL0"/>
<dbReference type="STRING" id="517418.Ctha_2159"/>
<dbReference type="KEGG" id="cts:Ctha_2159"/>
<dbReference type="eggNOG" id="COG0588">
    <property type="taxonomic scope" value="Bacteria"/>
</dbReference>
<dbReference type="HOGENOM" id="CLU_033323_1_1_10"/>
<dbReference type="OrthoDB" id="9782128at2"/>
<dbReference type="UniPathway" id="UPA00109">
    <property type="reaction ID" value="UER00186"/>
</dbReference>
<dbReference type="Proteomes" id="UP000001208">
    <property type="component" value="Chromosome"/>
</dbReference>
<dbReference type="GO" id="GO:0004619">
    <property type="term" value="F:phosphoglycerate mutase activity"/>
    <property type="evidence" value="ECO:0007669"/>
    <property type="project" value="UniProtKB-EC"/>
</dbReference>
<dbReference type="GO" id="GO:0006094">
    <property type="term" value="P:gluconeogenesis"/>
    <property type="evidence" value="ECO:0007669"/>
    <property type="project" value="UniProtKB-UniRule"/>
</dbReference>
<dbReference type="GO" id="GO:0006096">
    <property type="term" value="P:glycolytic process"/>
    <property type="evidence" value="ECO:0007669"/>
    <property type="project" value="UniProtKB-UniRule"/>
</dbReference>
<dbReference type="CDD" id="cd07067">
    <property type="entry name" value="HP_PGM_like"/>
    <property type="match status" value="1"/>
</dbReference>
<dbReference type="FunFam" id="3.40.50.1240:FF:000003">
    <property type="entry name" value="2,3-bisphosphoglycerate-dependent phosphoglycerate mutase"/>
    <property type="match status" value="1"/>
</dbReference>
<dbReference type="Gene3D" id="3.40.50.1240">
    <property type="entry name" value="Phosphoglycerate mutase-like"/>
    <property type="match status" value="1"/>
</dbReference>
<dbReference type="HAMAP" id="MF_01039">
    <property type="entry name" value="PGAM_GpmA"/>
    <property type="match status" value="1"/>
</dbReference>
<dbReference type="InterPro" id="IPR013078">
    <property type="entry name" value="His_Pase_superF_clade-1"/>
</dbReference>
<dbReference type="InterPro" id="IPR029033">
    <property type="entry name" value="His_PPase_superfam"/>
</dbReference>
<dbReference type="InterPro" id="IPR001345">
    <property type="entry name" value="PG/BPGM_mutase_AS"/>
</dbReference>
<dbReference type="InterPro" id="IPR005952">
    <property type="entry name" value="Phosphogly_mut1"/>
</dbReference>
<dbReference type="NCBIfam" id="TIGR01258">
    <property type="entry name" value="pgm_1"/>
    <property type="match status" value="1"/>
</dbReference>
<dbReference type="NCBIfam" id="NF010713">
    <property type="entry name" value="PRK14115.1"/>
    <property type="match status" value="1"/>
</dbReference>
<dbReference type="NCBIfam" id="NF010718">
    <property type="entry name" value="PRK14120.1"/>
    <property type="match status" value="1"/>
</dbReference>
<dbReference type="PANTHER" id="PTHR11931">
    <property type="entry name" value="PHOSPHOGLYCERATE MUTASE"/>
    <property type="match status" value="1"/>
</dbReference>
<dbReference type="Pfam" id="PF00300">
    <property type="entry name" value="His_Phos_1"/>
    <property type="match status" value="1"/>
</dbReference>
<dbReference type="PIRSF" id="PIRSF000709">
    <property type="entry name" value="6PFK_2-Ptase"/>
    <property type="match status" value="1"/>
</dbReference>
<dbReference type="SMART" id="SM00855">
    <property type="entry name" value="PGAM"/>
    <property type="match status" value="1"/>
</dbReference>
<dbReference type="SUPFAM" id="SSF53254">
    <property type="entry name" value="Phosphoglycerate mutase-like"/>
    <property type="match status" value="1"/>
</dbReference>
<dbReference type="PROSITE" id="PS00175">
    <property type="entry name" value="PG_MUTASE"/>
    <property type="match status" value="1"/>
</dbReference>
<proteinExistence type="inferred from homology"/>
<keyword id="KW-0312">Gluconeogenesis</keyword>
<keyword id="KW-0324">Glycolysis</keyword>
<keyword id="KW-0413">Isomerase</keyword>
<keyword id="KW-1185">Reference proteome</keyword>
<sequence length="249" mass="28490">MIKLVLLRHGESVWNKENRFTGWKDVDLTEKGVQEAKRAGEFMKKEGLDFDIAYTSVLKRAIRTLNLALNEMDLQWIPVNKTWRLNERHYGALQGLNKSETAEKFGEEQVLIWRRSYDTPPPALEKSDERYPGHDPRYKDLTEAELPLTECLKDTVERFLPYWHETIAPTIKSGKRVIIAAHGNSLRSLVKYLDNISDEDIVGLNIPTGMPLVYELDDDMKPIKNYYLGDPDDVAKAMASVANQGKAKA</sequence>
<reference key="1">
    <citation type="submission" date="2008-06" db="EMBL/GenBank/DDBJ databases">
        <title>Complete sequence of Chloroherpeton thalassium ATCC 35110.</title>
        <authorList>
            <consortium name="US DOE Joint Genome Institute"/>
            <person name="Lucas S."/>
            <person name="Copeland A."/>
            <person name="Lapidus A."/>
            <person name="Glavina del Rio T."/>
            <person name="Dalin E."/>
            <person name="Tice H."/>
            <person name="Bruce D."/>
            <person name="Goodwin L."/>
            <person name="Pitluck S."/>
            <person name="Schmutz J."/>
            <person name="Larimer F."/>
            <person name="Land M."/>
            <person name="Hauser L."/>
            <person name="Kyrpides N."/>
            <person name="Mikhailova N."/>
            <person name="Liu Z."/>
            <person name="Li T."/>
            <person name="Zhao F."/>
            <person name="Overmann J."/>
            <person name="Bryant D.A."/>
            <person name="Richardson P."/>
        </authorList>
    </citation>
    <scope>NUCLEOTIDE SEQUENCE [LARGE SCALE GENOMIC DNA]</scope>
    <source>
        <strain>ATCC 35110 / GB-78</strain>
    </source>
</reference>
<feature type="chain" id="PRO_1000135936" description="2,3-bisphosphoglycerate-dependent phosphoglycerate mutase">
    <location>
        <begin position="1"/>
        <end position="249"/>
    </location>
</feature>
<feature type="active site" description="Tele-phosphohistidine intermediate" evidence="1">
    <location>
        <position position="9"/>
    </location>
</feature>
<feature type="active site" description="Proton donor/acceptor" evidence="1">
    <location>
        <position position="87"/>
    </location>
</feature>
<feature type="binding site" evidence="1">
    <location>
        <begin position="8"/>
        <end position="15"/>
    </location>
    <ligand>
        <name>substrate</name>
    </ligand>
</feature>
<feature type="binding site" evidence="1">
    <location>
        <begin position="21"/>
        <end position="22"/>
    </location>
    <ligand>
        <name>substrate</name>
    </ligand>
</feature>
<feature type="binding site" evidence="1">
    <location>
        <position position="60"/>
    </location>
    <ligand>
        <name>substrate</name>
    </ligand>
</feature>
<feature type="binding site" evidence="1">
    <location>
        <begin position="87"/>
        <end position="90"/>
    </location>
    <ligand>
        <name>substrate</name>
    </ligand>
</feature>
<feature type="binding site" evidence="1">
    <location>
        <position position="98"/>
    </location>
    <ligand>
        <name>substrate</name>
    </ligand>
</feature>
<feature type="binding site" evidence="1">
    <location>
        <begin position="114"/>
        <end position="115"/>
    </location>
    <ligand>
        <name>substrate</name>
    </ligand>
</feature>
<feature type="binding site" evidence="1">
    <location>
        <begin position="183"/>
        <end position="184"/>
    </location>
    <ligand>
        <name>substrate</name>
    </ligand>
</feature>
<feature type="site" description="Transition state stabilizer" evidence="1">
    <location>
        <position position="182"/>
    </location>
</feature>